<gene>
    <name evidence="10" type="primary">Gabrr2</name>
</gene>
<protein>
    <recommendedName>
        <fullName>Gamma-aminobutyric acid receptor subunit rho-2</fullName>
        <shortName evidence="2">GABAAR subunit rho-2</shortName>
    </recommendedName>
    <alternativeName>
        <fullName>GABA(A) receptor subunit rho-2</fullName>
    </alternativeName>
    <alternativeName>
        <fullName evidence="8">GABA(C) receptor</fullName>
    </alternativeName>
</protein>
<dbReference type="EMBL" id="D38494">
    <property type="protein sequence ID" value="BAA07506.1"/>
    <property type="molecule type" value="mRNA"/>
</dbReference>
<dbReference type="PIR" id="I56523">
    <property type="entry name" value="I56523"/>
</dbReference>
<dbReference type="RefSeq" id="NP_058988.1">
    <molecule id="P47742-1"/>
    <property type="nucleotide sequence ID" value="NM_017292.2"/>
</dbReference>
<dbReference type="SMR" id="P47742"/>
<dbReference type="FunCoup" id="P47742">
    <property type="interactions" value="17"/>
</dbReference>
<dbReference type="STRING" id="10116.ENSRNOP00000009973"/>
<dbReference type="GlyCosmos" id="P47742">
    <property type="glycosylation" value="2 sites, No reported glycans"/>
</dbReference>
<dbReference type="GlyGen" id="P47742">
    <property type="glycosylation" value="2 sites"/>
</dbReference>
<dbReference type="iPTMnet" id="P47742"/>
<dbReference type="PhosphoSitePlus" id="P47742"/>
<dbReference type="PaxDb" id="10116-ENSRNOP00000009973"/>
<dbReference type="Ensembl" id="ENSRNOT00000009973.4">
    <molecule id="P47742-2"/>
    <property type="protein sequence ID" value="ENSRNOP00000009973.4"/>
    <property type="gene ID" value="ENSRNOG00000007490.4"/>
</dbReference>
<dbReference type="GeneID" id="29695"/>
<dbReference type="KEGG" id="rno:29695"/>
<dbReference type="UCSC" id="RGD:61902">
    <molecule id="P47742-1"/>
    <property type="organism name" value="rat"/>
</dbReference>
<dbReference type="AGR" id="RGD:61902"/>
<dbReference type="CTD" id="2570"/>
<dbReference type="RGD" id="61902">
    <property type="gene designation" value="Gabrr2"/>
</dbReference>
<dbReference type="VEuPathDB" id="HostDB:ENSRNOG00000007490"/>
<dbReference type="eggNOG" id="KOG3643">
    <property type="taxonomic scope" value="Eukaryota"/>
</dbReference>
<dbReference type="GeneTree" id="ENSGT00940000156864"/>
<dbReference type="InParanoid" id="P47742"/>
<dbReference type="OMA" id="KRWTGHL"/>
<dbReference type="TreeFam" id="TF315453"/>
<dbReference type="Reactome" id="R-RNO-977443">
    <property type="pathway name" value="GABA receptor activation"/>
</dbReference>
<dbReference type="PRO" id="PR:P47742"/>
<dbReference type="Proteomes" id="UP000002494">
    <property type="component" value="Chromosome 5"/>
</dbReference>
<dbReference type="Bgee" id="ENSRNOG00000007490">
    <property type="expression patterns" value="Expressed in skeletal muscle tissue and 16 other cell types or tissues"/>
</dbReference>
<dbReference type="ExpressionAtlas" id="P47742">
    <property type="expression patterns" value="baseline and differential"/>
</dbReference>
<dbReference type="GO" id="GO:0034707">
    <property type="term" value="C:chloride channel complex"/>
    <property type="evidence" value="ECO:0007669"/>
    <property type="project" value="UniProtKB-KW"/>
</dbReference>
<dbReference type="GO" id="GO:1902711">
    <property type="term" value="C:GABA-A receptor complex"/>
    <property type="evidence" value="ECO:0000318"/>
    <property type="project" value="GO_Central"/>
</dbReference>
<dbReference type="GO" id="GO:0098982">
    <property type="term" value="C:GABA-ergic synapse"/>
    <property type="evidence" value="ECO:0000314"/>
    <property type="project" value="SynGO"/>
</dbReference>
<dbReference type="GO" id="GO:0097708">
    <property type="term" value="C:intracellular vesicle"/>
    <property type="evidence" value="ECO:0000266"/>
    <property type="project" value="RGD"/>
</dbReference>
<dbReference type="GO" id="GO:0045211">
    <property type="term" value="C:postsynaptic membrane"/>
    <property type="evidence" value="ECO:0007669"/>
    <property type="project" value="UniProtKB-SubCell"/>
</dbReference>
<dbReference type="GO" id="GO:0005254">
    <property type="term" value="F:chloride channel activity"/>
    <property type="evidence" value="ECO:0000304"/>
    <property type="project" value="RGD"/>
</dbReference>
<dbReference type="GO" id="GO:0004890">
    <property type="term" value="F:GABA-A receptor activity"/>
    <property type="evidence" value="ECO:0000314"/>
    <property type="project" value="UniProtKB"/>
</dbReference>
<dbReference type="GO" id="GO:0022851">
    <property type="term" value="F:GABA-gated chloride ion channel activity"/>
    <property type="evidence" value="ECO:0000314"/>
    <property type="project" value="UniProtKB"/>
</dbReference>
<dbReference type="GO" id="GO:0005237">
    <property type="term" value="F:inhibitory extracellular ligand-gated monoatomic ion channel activity"/>
    <property type="evidence" value="ECO:0000304"/>
    <property type="project" value="RGD"/>
</dbReference>
<dbReference type="GO" id="GO:0019904">
    <property type="term" value="F:protein domain specific binding"/>
    <property type="evidence" value="ECO:0000353"/>
    <property type="project" value="RGD"/>
</dbReference>
<dbReference type="GO" id="GO:1904315">
    <property type="term" value="F:transmitter-gated monoatomic ion channel activity involved in regulation of postsynaptic membrane potential"/>
    <property type="evidence" value="ECO:0000314"/>
    <property type="project" value="SynGO"/>
</dbReference>
<dbReference type="GO" id="GO:1902476">
    <property type="term" value="P:chloride transmembrane transport"/>
    <property type="evidence" value="ECO:0000318"/>
    <property type="project" value="GO_Central"/>
</dbReference>
<dbReference type="GO" id="GO:0007214">
    <property type="term" value="P:gamma-aminobutyric acid signaling pathway"/>
    <property type="evidence" value="ECO:0000266"/>
    <property type="project" value="RGD"/>
</dbReference>
<dbReference type="GO" id="GO:0007601">
    <property type="term" value="P:visual perception"/>
    <property type="evidence" value="ECO:0000266"/>
    <property type="project" value="RGD"/>
</dbReference>
<dbReference type="CDD" id="cd19059">
    <property type="entry name" value="LGIC_TM_GABAAR_rho"/>
    <property type="match status" value="1"/>
</dbReference>
<dbReference type="FunFam" id="2.70.170.10:FF:000007">
    <property type="entry name" value="Gamma-aminobutyric acid type A receptor rho2 subunit"/>
    <property type="match status" value="1"/>
</dbReference>
<dbReference type="FunFam" id="1.20.58.390:FF:000005">
    <property type="entry name" value="Putative gamma-aminobutyric acid receptor subunit rho-2-like"/>
    <property type="match status" value="1"/>
</dbReference>
<dbReference type="Gene3D" id="2.70.170.10">
    <property type="entry name" value="Neurotransmitter-gated ion-channel ligand-binding domain"/>
    <property type="match status" value="1"/>
</dbReference>
<dbReference type="Gene3D" id="1.20.58.390">
    <property type="entry name" value="Neurotransmitter-gated ion-channel transmembrane domain"/>
    <property type="match status" value="1"/>
</dbReference>
<dbReference type="InterPro" id="IPR006028">
    <property type="entry name" value="GABAA/Glycine_rcpt"/>
</dbReference>
<dbReference type="InterPro" id="IPR008059">
    <property type="entry name" value="GABAAa_rho2_rcpt"/>
</dbReference>
<dbReference type="InterPro" id="IPR008057">
    <property type="entry name" value="GABAAa_rho_rcpt"/>
</dbReference>
<dbReference type="InterPro" id="IPR006202">
    <property type="entry name" value="Neur_chan_lig-bd"/>
</dbReference>
<dbReference type="InterPro" id="IPR036734">
    <property type="entry name" value="Neur_chan_lig-bd_sf"/>
</dbReference>
<dbReference type="InterPro" id="IPR006201">
    <property type="entry name" value="Neur_channel"/>
</dbReference>
<dbReference type="InterPro" id="IPR036719">
    <property type="entry name" value="Neuro-gated_channel_TM_sf"/>
</dbReference>
<dbReference type="InterPro" id="IPR038050">
    <property type="entry name" value="Neuro_actylchol_rec"/>
</dbReference>
<dbReference type="InterPro" id="IPR006029">
    <property type="entry name" value="Neurotrans-gated_channel_TM"/>
</dbReference>
<dbReference type="InterPro" id="IPR018000">
    <property type="entry name" value="Neurotransmitter_ion_chnl_CS"/>
</dbReference>
<dbReference type="NCBIfam" id="TIGR00860">
    <property type="entry name" value="LIC"/>
    <property type="match status" value="1"/>
</dbReference>
<dbReference type="PANTHER" id="PTHR18945">
    <property type="entry name" value="NEUROTRANSMITTER GATED ION CHANNEL"/>
    <property type="match status" value="1"/>
</dbReference>
<dbReference type="Pfam" id="PF02931">
    <property type="entry name" value="Neur_chan_LBD"/>
    <property type="match status" value="1"/>
</dbReference>
<dbReference type="Pfam" id="PF02932">
    <property type="entry name" value="Neur_chan_memb"/>
    <property type="match status" value="1"/>
</dbReference>
<dbReference type="PRINTS" id="PR00253">
    <property type="entry name" value="GABAARECEPTR"/>
</dbReference>
<dbReference type="PRINTS" id="PR01670">
    <property type="entry name" value="GABAARRHO"/>
</dbReference>
<dbReference type="PRINTS" id="PR01672">
    <property type="entry name" value="GABAARRHO2"/>
</dbReference>
<dbReference type="PRINTS" id="PR00252">
    <property type="entry name" value="NRIONCHANNEL"/>
</dbReference>
<dbReference type="SUPFAM" id="SSF90112">
    <property type="entry name" value="Neurotransmitter-gated ion-channel transmembrane pore"/>
    <property type="match status" value="1"/>
</dbReference>
<dbReference type="SUPFAM" id="SSF63712">
    <property type="entry name" value="Nicotinic receptor ligand binding domain-like"/>
    <property type="match status" value="1"/>
</dbReference>
<dbReference type="PROSITE" id="PS00236">
    <property type="entry name" value="NEUROTR_ION_CHANNEL"/>
    <property type="match status" value="1"/>
</dbReference>
<evidence type="ECO:0000250" key="1">
    <source>
        <dbReference type="UniProtKB" id="P24046"/>
    </source>
</evidence>
<evidence type="ECO:0000250" key="2">
    <source>
        <dbReference type="UniProtKB" id="P28476"/>
    </source>
</evidence>
<evidence type="ECO:0000250" key="3">
    <source>
        <dbReference type="UniProtKB" id="P56476"/>
    </source>
</evidence>
<evidence type="ECO:0000255" key="4"/>
<evidence type="ECO:0000269" key="5">
    <source>
    </source>
</evidence>
<evidence type="ECO:0000269" key="6">
    <source>
    </source>
</evidence>
<evidence type="ECO:0000269" key="7">
    <source>
    </source>
</evidence>
<evidence type="ECO:0000303" key="8">
    <source>
    </source>
</evidence>
<evidence type="ECO:0000305" key="9"/>
<evidence type="ECO:0000312" key="10">
    <source>
        <dbReference type="RGD" id="61902"/>
    </source>
</evidence>
<name>GBRR2_RAT</name>
<comment type="function">
    <text evidence="1 3 6 7">Rho subunit of the pentameric ligand-gated chloride channels responsible for mediating the effects of gamma-aminobutyric acid (GABA), the major inhibitory neurotransmitter in the brain (PubMed:8524843). Rho-containing GABA-gated chloride channels are a subclass of GABA(A) receptors (GABAARs) entirely composed of rho subunits, where GABA molecules bind at the rho intersubunit interfaces (By similarity). When activated by GABA, rho-GABAARs selectively allow the flow of chloride anions across the cell membrane down their electrochemical gradient (PubMed:8524843). Rho-2 GABAARs may contribute to the regulation of glial development in the cerebellum by controlling extrasynaptic transmission (By similarity). Rho-2 GABAARs are also involved in neuronal tonic (extrasynaptic) and phasic (synaptic) transmission in the Purkinje neurons of the cerebellum (By similarity). Rho-2 GABAARs expressed in retina may play a role in retinal neurotransmission (PubMed:7643126).</text>
</comment>
<comment type="catalytic activity">
    <reaction evidence="7">
        <text>chloride(in) = chloride(out)</text>
        <dbReference type="Rhea" id="RHEA:29823"/>
        <dbReference type="ChEBI" id="CHEBI:17996"/>
    </reaction>
</comment>
<comment type="activity regulation">
    <text evidence="7">In contrast with rho-1 and rho-3 homopentamers, rho-2 GABAARs are not inhibited by picrotoxin.</text>
</comment>
<comment type="subunit">
    <text evidence="5 7">Three rho subunits (rho-1/GBRR1, rho-2/GBRR2 and rho-3/GBRR3) coassemble either to form functional homopentamers or heteropentamers (PubMed:8524843). Rho-2 is unable to form a functional homopentamer (PubMed:8524843). Interacts with SQSTM1 (PubMed:12431995).</text>
</comment>
<comment type="subcellular location">
    <subcellularLocation>
        <location evidence="3">Postsynaptic cell membrane</location>
        <topology evidence="4">Multi-pass membrane protein</topology>
    </subcellularLocation>
    <subcellularLocation>
        <location evidence="3">Cell membrane</location>
        <topology evidence="4">Multi-pass membrane protein</topology>
    </subcellularLocation>
</comment>
<comment type="alternative products">
    <event type="alternative initiation"/>
    <isoform>
        <id>P47742-1</id>
        <name>1</name>
        <sequence type="displayed"/>
    </isoform>
    <isoform>
        <id>P47742-2</id>
        <name>2</name>
        <sequence type="described" ref="VSP_044375"/>
    </isoform>
</comment>
<comment type="tissue specificity">
    <text evidence="6">Expressed in spinal cord and in cerebellum (PubMed:7643126). Expressed in retina (PubMed:7643126).</text>
</comment>
<comment type="domain">
    <text evidence="1">GABAARs subunits share a common topological structure: a peptide sequence made up of a long extracellular N-terminal, four transmembrane domains, intracellular or cytoplasmic domain located between the third and the fourth transmembrane domains.</text>
</comment>
<comment type="miscellaneous">
    <molecule>Isoform 2</molecule>
    <text evidence="9">Isoform 2 could be translated from an upstream initiator ATG located in frame within the first coding exon. The probability of a signal peptide within this isoform is very low.</text>
</comment>
<comment type="similarity">
    <text evidence="9">Belongs to the ligand-gated ion channel (TC 1.A.9) family. Gamma-aminobutyric acid receptor (TC 1.A.9.5) subfamily. GABRR2 sub-subfamily.</text>
</comment>
<sequence>MPYFMRLALFLFCLMALVESRKPRRKRWTGHLETSKPSHLYKKNLDVTKIRTGKPRPLLRVEDHDFTMRPAFGGPAIPVGVDVQVESLDSISEVDMDFTMTLYLRHYWRDERLAFPSSSNRSMTFDGRLVKKIWVPDVFFVHSKRSFTHDTTTDNIMLRVFPDGHVLYSMRITVTAMCNMDFSHFPLDSQTCSLELESYAYTDEDLMLYWKNGDESLKTDEKISLSQFLIQKFHTTSRLAFYSSTGWYNRLYINFTLRRHIFFFLLQTYFPATLMVMLSWVSFWIDHRAVPARVSLGIMTVLTMSTIITGVNASMPRVSYIRAVDIYLWVSFVFVFLSVLEYAAVNYLTTVQEQKERKLRDKFPCTCGMLHSRTMTLDGSYSESEANSLAGYPRSHILPEEERQDKIVVHLALNSELTSSRKKGLLKGQMGLYIFQNTHAIDKYSRLIFPAFYIVFNLIYWSVFS</sequence>
<reference key="1">
    <citation type="journal article" date="1995" name="J. Neurochem.">
        <title>Identification of GABAA receptor subunits in rat retina: cloning of the rat GABAA receptor rho 2-subunit cDNA.</title>
        <authorList>
            <person name="Ogurusu T."/>
            <person name="Taira H."/>
            <person name="Shingai R."/>
        </authorList>
    </citation>
    <scope>NUCLEOTIDE SEQUENCE [MRNA] (ISOFORM 1)</scope>
    <scope>FUNCTION</scope>
    <scope>TISSUE SPECIFICITY</scope>
    <source>
        <strain>Sprague-Dawley</strain>
        <tissue>Retina</tissue>
    </source>
</reference>
<reference key="2">
    <citation type="journal article" date="1995" name="Proc. Natl. Acad. Sci. U.S.A.">
        <title>Cloning of a gamma-aminobutyric acid type C receptor subunit in rat retina with a methionine residue critical for picrotoxinin channel block.</title>
        <authorList>
            <person name="Zhang D."/>
            <person name="Pan Z."/>
            <person name="Zhang X."/>
            <person name="Brideau A.D."/>
            <person name="Lipton S.A."/>
        </authorList>
    </citation>
    <scope>FUNCTION</scope>
    <scope>TRANSPORTER ACTIVITY</scope>
    <scope>ACTIVITY REGULATION</scope>
    <scope>INTERACTION WITH GBRR1</scope>
    <scope>MUTAGENESIS OF MET-299</scope>
    <source>
        <strain>Sprague-Dawley</strain>
    </source>
</reference>
<reference key="3">
    <citation type="journal article" date="2003" name="J. Biol. Chem.">
        <title>ZIP3, a new splice variant of the PKC-zeta-interacting protein family, binds to GABAC receptors, PKC-zeta, and Kv beta 2.</title>
        <authorList>
            <person name="Croci C."/>
            <person name="Brandstaetter J.H."/>
            <person name="Enz R."/>
        </authorList>
    </citation>
    <scope>INTERACTION WITH SQSTM1</scope>
</reference>
<feature type="signal peptide" evidence="4">
    <location>
        <begin position="1"/>
        <end position="20"/>
    </location>
</feature>
<feature type="chain" id="PRO_0000000490" description="Gamma-aminobutyric acid receptor subunit rho-2" evidence="4">
    <location>
        <begin position="21"/>
        <end position="465"/>
    </location>
</feature>
<feature type="topological domain" description="Extracellular" evidence="9">
    <location>
        <begin position="21"/>
        <end position="260"/>
    </location>
</feature>
<feature type="transmembrane region" description="Helical" evidence="4">
    <location>
        <begin position="261"/>
        <end position="281"/>
    </location>
</feature>
<feature type="topological domain" description="Cytoplasmic" evidence="9">
    <location>
        <begin position="282"/>
        <end position="293"/>
    </location>
</feature>
<feature type="transmembrane region" description="Helical" evidence="4">
    <location>
        <begin position="294"/>
        <end position="314"/>
    </location>
</feature>
<feature type="topological domain" description="Extracellular" evidence="9">
    <location>
        <begin position="315"/>
        <end position="325"/>
    </location>
</feature>
<feature type="transmembrane region" description="Helical" evidence="4">
    <location>
        <begin position="326"/>
        <end position="346"/>
    </location>
</feature>
<feature type="topological domain" description="Cytoplasmic" evidence="9">
    <location>
        <begin position="347"/>
        <end position="443"/>
    </location>
</feature>
<feature type="transmembrane region" description="Helical" evidence="4">
    <location>
        <begin position="444"/>
        <end position="464"/>
    </location>
</feature>
<feature type="topological domain" description="Extracellular" evidence="9">
    <location>
        <position position="465"/>
    </location>
</feature>
<feature type="binding site" description="in chain A" evidence="1">
    <location>
        <position position="105"/>
    </location>
    <ligand>
        <name>4-aminobutanoate</name>
        <dbReference type="ChEBI" id="CHEBI:59888"/>
        <note>ligand shared between two neighboring rho subunits</note>
    </ligand>
</feature>
<feature type="binding site" description="in chain A" evidence="1">
    <location>
        <position position="169"/>
    </location>
    <ligand>
        <name>4-aminobutanoate</name>
        <dbReference type="ChEBI" id="CHEBI:59888"/>
        <note>ligand shared between two neighboring rho subunits</note>
    </ligand>
</feature>
<feature type="binding site" description="in chain B" evidence="1">
    <location>
        <position position="197"/>
    </location>
    <ligand>
        <name>4-aminobutanoate</name>
        <dbReference type="ChEBI" id="CHEBI:59888"/>
        <note>ligand shared between two neighboring rho subunits</note>
    </ligand>
</feature>
<feature type="glycosylation site" description="N-linked (GlcNAc...) asparagine" evidence="4">
    <location>
        <position position="120"/>
    </location>
</feature>
<feature type="glycosylation site" description="N-linked (GlcNAc...) asparagine" evidence="4">
    <location>
        <position position="254"/>
    </location>
</feature>
<feature type="disulfide bond" evidence="1">
    <location>
        <begin position="178"/>
        <end position="192"/>
    </location>
</feature>
<feature type="splice variant" id="VSP_044375" description="In isoform 2." evidence="9">
    <original>M</original>
    <variation>MVKSQGIFPCSCCSPVPACCVIDVCRM</variation>
    <location>
        <position position="1"/>
    </location>
</feature>
<feature type="mutagenesis site" description="Loss of picrotoxin resistance." evidence="7">
    <original>M</original>
    <variation>T</variation>
    <location>
        <position position="299"/>
    </location>
</feature>
<proteinExistence type="evidence at protein level"/>
<accession>P47742</accession>
<keyword id="KW-0024">Alternative initiation</keyword>
<keyword id="KW-1003">Cell membrane</keyword>
<keyword id="KW-0868">Chloride</keyword>
<keyword id="KW-0869">Chloride channel</keyword>
<keyword id="KW-1015">Disulfide bond</keyword>
<keyword id="KW-0325">Glycoprotein</keyword>
<keyword id="KW-0407">Ion channel</keyword>
<keyword id="KW-0406">Ion transport</keyword>
<keyword id="KW-0472">Membrane</keyword>
<keyword id="KW-0628">Postsynaptic cell membrane</keyword>
<keyword id="KW-1185">Reference proteome</keyword>
<keyword id="KW-0732">Signal</keyword>
<keyword id="KW-0770">Synapse</keyword>
<keyword id="KW-0812">Transmembrane</keyword>
<keyword id="KW-1133">Transmembrane helix</keyword>
<keyword id="KW-0813">Transport</keyword>
<organism>
    <name type="scientific">Rattus norvegicus</name>
    <name type="common">Rat</name>
    <dbReference type="NCBI Taxonomy" id="10116"/>
    <lineage>
        <taxon>Eukaryota</taxon>
        <taxon>Metazoa</taxon>
        <taxon>Chordata</taxon>
        <taxon>Craniata</taxon>
        <taxon>Vertebrata</taxon>
        <taxon>Euteleostomi</taxon>
        <taxon>Mammalia</taxon>
        <taxon>Eutheria</taxon>
        <taxon>Euarchontoglires</taxon>
        <taxon>Glires</taxon>
        <taxon>Rodentia</taxon>
        <taxon>Myomorpha</taxon>
        <taxon>Muroidea</taxon>
        <taxon>Muridae</taxon>
        <taxon>Murinae</taxon>
        <taxon>Rattus</taxon>
    </lineage>
</organism>